<reference key="1">
    <citation type="journal article" date="2011" name="Stand. Genomic Sci.">
        <title>Complete genome sequence of Parvibaculum lavamentivorans type strain (DS-1(T)).</title>
        <authorList>
            <person name="Schleheck D."/>
            <person name="Weiss M."/>
            <person name="Pitluck S."/>
            <person name="Bruce D."/>
            <person name="Land M.L."/>
            <person name="Han S."/>
            <person name="Saunders E."/>
            <person name="Tapia R."/>
            <person name="Detter C."/>
            <person name="Brettin T."/>
            <person name="Han J."/>
            <person name="Woyke T."/>
            <person name="Goodwin L."/>
            <person name="Pennacchio L."/>
            <person name="Nolan M."/>
            <person name="Cook A.M."/>
            <person name="Kjelleberg S."/>
            <person name="Thomas T."/>
        </authorList>
    </citation>
    <scope>NUCLEOTIDE SEQUENCE [LARGE SCALE GENOMIC DNA]</scope>
    <source>
        <strain>DS-1 / DSM 13023 / NCIMB 13966</strain>
    </source>
</reference>
<keyword id="KW-1185">Reference proteome</keyword>
<keyword id="KW-0687">Ribonucleoprotein</keyword>
<keyword id="KW-0689">Ribosomal protein</keyword>
<proteinExistence type="inferred from homology"/>
<dbReference type="EMBL" id="CP000774">
    <property type="protein sequence ID" value="ABS64362.1"/>
    <property type="molecule type" value="Genomic_DNA"/>
</dbReference>
<dbReference type="RefSeq" id="WP_012111676.1">
    <property type="nucleotide sequence ID" value="NC_009719.1"/>
</dbReference>
<dbReference type="SMR" id="A7HWS9"/>
<dbReference type="STRING" id="402881.Plav_2754"/>
<dbReference type="KEGG" id="pla:Plav_2754"/>
<dbReference type="eggNOG" id="COG1841">
    <property type="taxonomic scope" value="Bacteria"/>
</dbReference>
<dbReference type="HOGENOM" id="CLU_131047_1_2_5"/>
<dbReference type="OrthoDB" id="9812790at2"/>
<dbReference type="Proteomes" id="UP000006377">
    <property type="component" value="Chromosome"/>
</dbReference>
<dbReference type="GO" id="GO:0022625">
    <property type="term" value="C:cytosolic large ribosomal subunit"/>
    <property type="evidence" value="ECO:0007669"/>
    <property type="project" value="TreeGrafter"/>
</dbReference>
<dbReference type="GO" id="GO:0003735">
    <property type="term" value="F:structural constituent of ribosome"/>
    <property type="evidence" value="ECO:0007669"/>
    <property type="project" value="InterPro"/>
</dbReference>
<dbReference type="GO" id="GO:0006412">
    <property type="term" value="P:translation"/>
    <property type="evidence" value="ECO:0007669"/>
    <property type="project" value="UniProtKB-UniRule"/>
</dbReference>
<dbReference type="CDD" id="cd01658">
    <property type="entry name" value="Ribosomal_L30"/>
    <property type="match status" value="1"/>
</dbReference>
<dbReference type="Gene3D" id="3.30.1390.20">
    <property type="entry name" value="Ribosomal protein L30, ferredoxin-like fold domain"/>
    <property type="match status" value="1"/>
</dbReference>
<dbReference type="HAMAP" id="MF_01371_B">
    <property type="entry name" value="Ribosomal_uL30_B"/>
    <property type="match status" value="1"/>
</dbReference>
<dbReference type="InterPro" id="IPR036919">
    <property type="entry name" value="Ribo_uL30_ferredoxin-like_sf"/>
</dbReference>
<dbReference type="InterPro" id="IPR005996">
    <property type="entry name" value="Ribosomal_uL30_bac-type"/>
</dbReference>
<dbReference type="InterPro" id="IPR016082">
    <property type="entry name" value="Ribosomal_uL30_ferredoxin-like"/>
</dbReference>
<dbReference type="NCBIfam" id="TIGR01308">
    <property type="entry name" value="rpmD_bact"/>
    <property type="match status" value="1"/>
</dbReference>
<dbReference type="PANTHER" id="PTHR15892:SF2">
    <property type="entry name" value="LARGE RIBOSOMAL SUBUNIT PROTEIN UL30M"/>
    <property type="match status" value="1"/>
</dbReference>
<dbReference type="PANTHER" id="PTHR15892">
    <property type="entry name" value="MITOCHONDRIAL RIBOSOMAL PROTEIN L30"/>
    <property type="match status" value="1"/>
</dbReference>
<dbReference type="Pfam" id="PF00327">
    <property type="entry name" value="Ribosomal_L30"/>
    <property type="match status" value="1"/>
</dbReference>
<dbReference type="PIRSF" id="PIRSF002211">
    <property type="entry name" value="Ribosomal_L30_bac-type"/>
    <property type="match status" value="1"/>
</dbReference>
<dbReference type="SUPFAM" id="SSF55129">
    <property type="entry name" value="Ribosomal protein L30p/L7e"/>
    <property type="match status" value="1"/>
</dbReference>
<sequence length="68" mass="7470">MSAKKSASKATVTVQQIGSPLRREPSQRQTLIGLGLNKMRRTKTLEDTPAVRGMINKVAHLVRVVDEA</sequence>
<accession>A7HWS9</accession>
<feature type="chain" id="PRO_1000073451" description="Large ribosomal subunit protein uL30">
    <location>
        <begin position="1"/>
        <end position="68"/>
    </location>
</feature>
<feature type="region of interest" description="Disordered" evidence="2">
    <location>
        <begin position="1"/>
        <end position="26"/>
    </location>
</feature>
<feature type="compositionally biased region" description="Polar residues" evidence="2">
    <location>
        <begin position="8"/>
        <end position="18"/>
    </location>
</feature>
<organism>
    <name type="scientific">Parvibaculum lavamentivorans (strain DS-1 / DSM 13023 / NCIMB 13966)</name>
    <dbReference type="NCBI Taxonomy" id="402881"/>
    <lineage>
        <taxon>Bacteria</taxon>
        <taxon>Pseudomonadati</taxon>
        <taxon>Pseudomonadota</taxon>
        <taxon>Alphaproteobacteria</taxon>
        <taxon>Hyphomicrobiales</taxon>
        <taxon>Parvibaculaceae</taxon>
        <taxon>Parvibaculum</taxon>
    </lineage>
</organism>
<evidence type="ECO:0000255" key="1">
    <source>
        <dbReference type="HAMAP-Rule" id="MF_01371"/>
    </source>
</evidence>
<evidence type="ECO:0000256" key="2">
    <source>
        <dbReference type="SAM" id="MobiDB-lite"/>
    </source>
</evidence>
<evidence type="ECO:0000305" key="3"/>
<name>RL30_PARL1</name>
<gene>
    <name evidence="1" type="primary">rpmD</name>
    <name type="ordered locus">Plav_2754</name>
</gene>
<comment type="subunit">
    <text evidence="1">Part of the 50S ribosomal subunit.</text>
</comment>
<comment type="similarity">
    <text evidence="1">Belongs to the universal ribosomal protein uL30 family.</text>
</comment>
<protein>
    <recommendedName>
        <fullName evidence="1">Large ribosomal subunit protein uL30</fullName>
    </recommendedName>
    <alternativeName>
        <fullName evidence="3">50S ribosomal protein L30</fullName>
    </alternativeName>
</protein>